<proteinExistence type="inferred from homology"/>
<evidence type="ECO:0000250" key="1"/>
<evidence type="ECO:0000255" key="2">
    <source>
        <dbReference type="HAMAP-Rule" id="MF_01057"/>
    </source>
</evidence>
<accession>A6TDW8</accession>
<name>TRMB_KLEP7</name>
<keyword id="KW-0489">Methyltransferase</keyword>
<keyword id="KW-0949">S-adenosyl-L-methionine</keyword>
<keyword id="KW-0808">Transferase</keyword>
<keyword id="KW-0819">tRNA processing</keyword>
<sequence length="239" mass="27013">MKNDVISPEFDENGRPLRRIRSFVRRQGRLTKGQQHALDNIWPVMGVEFNDAPLDFAALFGRDAPVTLEIGFGMGASLVAMAKAKPEQNFLGIEVHSPGVGACLASAEEEGVQNLRVMCHDAVEVLHTMIPDNSLNMVQLFFPDPWHKARHNKRRIVQPPFAELVKSKLKLGGVFHMATDWEAYAVHMLEVMSSLEGYRNQSASNDYVPRPESRPVTKFEQRGHRLGHGVWDLMFERVK</sequence>
<feature type="chain" id="PRO_1000064398" description="tRNA (guanine-N(7)-)-methyltransferase">
    <location>
        <begin position="1"/>
        <end position="239"/>
    </location>
</feature>
<feature type="region of interest" description="Interaction with RNA" evidence="2">
    <location>
        <begin position="150"/>
        <end position="155"/>
    </location>
</feature>
<feature type="active site" evidence="1">
    <location>
        <position position="144"/>
    </location>
</feature>
<feature type="binding site" evidence="2">
    <location>
        <position position="69"/>
    </location>
    <ligand>
        <name>S-adenosyl-L-methionine</name>
        <dbReference type="ChEBI" id="CHEBI:59789"/>
    </ligand>
</feature>
<feature type="binding site" evidence="2">
    <location>
        <position position="94"/>
    </location>
    <ligand>
        <name>S-adenosyl-L-methionine</name>
        <dbReference type="ChEBI" id="CHEBI:59789"/>
    </ligand>
</feature>
<feature type="binding site" evidence="2">
    <location>
        <position position="121"/>
    </location>
    <ligand>
        <name>S-adenosyl-L-methionine</name>
        <dbReference type="ChEBI" id="CHEBI:59789"/>
    </ligand>
</feature>
<feature type="binding site" evidence="2">
    <location>
        <position position="144"/>
    </location>
    <ligand>
        <name>S-adenosyl-L-methionine</name>
        <dbReference type="ChEBI" id="CHEBI:59789"/>
    </ligand>
</feature>
<feature type="binding site" evidence="2">
    <location>
        <position position="148"/>
    </location>
    <ligand>
        <name>substrate</name>
    </ligand>
</feature>
<feature type="binding site" evidence="2">
    <location>
        <position position="180"/>
    </location>
    <ligand>
        <name>substrate</name>
    </ligand>
</feature>
<feature type="binding site" evidence="2">
    <location>
        <begin position="217"/>
        <end position="220"/>
    </location>
    <ligand>
        <name>substrate</name>
    </ligand>
</feature>
<dbReference type="EC" id="2.1.1.33" evidence="2"/>
<dbReference type="EMBL" id="CP000647">
    <property type="protein sequence ID" value="ABR78789.1"/>
    <property type="molecule type" value="Genomic_DNA"/>
</dbReference>
<dbReference type="RefSeq" id="WP_002916627.1">
    <property type="nucleotide sequence ID" value="NC_009648.1"/>
</dbReference>
<dbReference type="SMR" id="A6TDW8"/>
<dbReference type="STRING" id="272620.KPN_03392"/>
<dbReference type="PaxDb" id="272620-KPN_03392"/>
<dbReference type="EnsemblBacteria" id="ABR78789">
    <property type="protein sequence ID" value="ABR78789"/>
    <property type="gene ID" value="KPN_03392"/>
</dbReference>
<dbReference type="GeneID" id="93271326"/>
<dbReference type="KEGG" id="kpn:KPN_03392"/>
<dbReference type="HOGENOM" id="CLU_050910_0_1_6"/>
<dbReference type="UniPathway" id="UPA00989"/>
<dbReference type="Proteomes" id="UP000000265">
    <property type="component" value="Chromosome"/>
</dbReference>
<dbReference type="GO" id="GO:0043527">
    <property type="term" value="C:tRNA methyltransferase complex"/>
    <property type="evidence" value="ECO:0007669"/>
    <property type="project" value="TreeGrafter"/>
</dbReference>
<dbReference type="GO" id="GO:0008176">
    <property type="term" value="F:tRNA (guanine(46)-N7)-methyltransferase activity"/>
    <property type="evidence" value="ECO:0007669"/>
    <property type="project" value="UniProtKB-UniRule"/>
</dbReference>
<dbReference type="FunFam" id="3.40.50.150:FF:000024">
    <property type="entry name" value="tRNA (guanine-N(7)-)-methyltransferase"/>
    <property type="match status" value="1"/>
</dbReference>
<dbReference type="Gene3D" id="3.40.50.150">
    <property type="entry name" value="Vaccinia Virus protein VP39"/>
    <property type="match status" value="1"/>
</dbReference>
<dbReference type="HAMAP" id="MF_01057">
    <property type="entry name" value="tRNA_methyltr_TrmB"/>
    <property type="match status" value="1"/>
</dbReference>
<dbReference type="InterPro" id="IPR029063">
    <property type="entry name" value="SAM-dependent_MTases_sf"/>
</dbReference>
<dbReference type="InterPro" id="IPR003358">
    <property type="entry name" value="tRNA_(Gua-N-7)_MeTrfase_Trmb"/>
</dbReference>
<dbReference type="InterPro" id="IPR055361">
    <property type="entry name" value="tRNA_methyltr_TrmB_bact"/>
</dbReference>
<dbReference type="NCBIfam" id="TIGR00091">
    <property type="entry name" value="tRNA (guanosine(46)-N7)-methyltransferase TrmB"/>
    <property type="match status" value="1"/>
</dbReference>
<dbReference type="PANTHER" id="PTHR23417">
    <property type="entry name" value="3-DEOXY-D-MANNO-OCTULOSONIC-ACID TRANSFERASE/TRNA GUANINE-N 7 - -METHYLTRANSFERASE"/>
    <property type="match status" value="1"/>
</dbReference>
<dbReference type="PANTHER" id="PTHR23417:SF14">
    <property type="entry name" value="PENTACOTRIPEPTIDE-REPEAT REGION OF PRORP DOMAIN-CONTAINING PROTEIN"/>
    <property type="match status" value="1"/>
</dbReference>
<dbReference type="Pfam" id="PF02390">
    <property type="entry name" value="Methyltransf_4"/>
    <property type="match status" value="1"/>
</dbReference>
<dbReference type="SUPFAM" id="SSF53335">
    <property type="entry name" value="S-adenosyl-L-methionine-dependent methyltransferases"/>
    <property type="match status" value="1"/>
</dbReference>
<dbReference type="PROSITE" id="PS51625">
    <property type="entry name" value="SAM_MT_TRMB"/>
    <property type="match status" value="1"/>
</dbReference>
<comment type="function">
    <text evidence="2">Catalyzes the formation of N(7)-methylguanine at position 46 (m7G46) in tRNA.</text>
</comment>
<comment type="catalytic activity">
    <reaction evidence="2">
        <text>guanosine(46) in tRNA + S-adenosyl-L-methionine = N(7)-methylguanosine(46) in tRNA + S-adenosyl-L-homocysteine</text>
        <dbReference type="Rhea" id="RHEA:42708"/>
        <dbReference type="Rhea" id="RHEA-COMP:10188"/>
        <dbReference type="Rhea" id="RHEA-COMP:10189"/>
        <dbReference type="ChEBI" id="CHEBI:57856"/>
        <dbReference type="ChEBI" id="CHEBI:59789"/>
        <dbReference type="ChEBI" id="CHEBI:74269"/>
        <dbReference type="ChEBI" id="CHEBI:74480"/>
        <dbReference type="EC" id="2.1.1.33"/>
    </reaction>
</comment>
<comment type="pathway">
    <text evidence="2">tRNA modification; N(7)-methylguanine-tRNA biosynthesis.</text>
</comment>
<comment type="subunit">
    <text evidence="2">Monomer.</text>
</comment>
<comment type="similarity">
    <text evidence="2">Belongs to the class I-like SAM-binding methyltransferase superfamily. TrmB family.</text>
</comment>
<protein>
    <recommendedName>
        <fullName evidence="2">tRNA (guanine-N(7)-)-methyltransferase</fullName>
        <ecNumber evidence="2">2.1.1.33</ecNumber>
    </recommendedName>
    <alternativeName>
        <fullName evidence="2">tRNA (guanine(46)-N(7))-methyltransferase</fullName>
    </alternativeName>
    <alternativeName>
        <fullName evidence="2">tRNA(m7G46)-methyltransferase</fullName>
    </alternativeName>
</protein>
<organism>
    <name type="scientific">Klebsiella pneumoniae subsp. pneumoniae (strain ATCC 700721 / MGH 78578)</name>
    <dbReference type="NCBI Taxonomy" id="272620"/>
    <lineage>
        <taxon>Bacteria</taxon>
        <taxon>Pseudomonadati</taxon>
        <taxon>Pseudomonadota</taxon>
        <taxon>Gammaproteobacteria</taxon>
        <taxon>Enterobacterales</taxon>
        <taxon>Enterobacteriaceae</taxon>
        <taxon>Klebsiella/Raoultella group</taxon>
        <taxon>Klebsiella</taxon>
        <taxon>Klebsiella pneumoniae complex</taxon>
    </lineage>
</organism>
<reference key="1">
    <citation type="submission" date="2006-09" db="EMBL/GenBank/DDBJ databases">
        <authorList>
            <consortium name="The Klebsiella pneumonia Genome Sequencing Project"/>
            <person name="McClelland M."/>
            <person name="Sanderson E.K."/>
            <person name="Spieth J."/>
            <person name="Clifton W.S."/>
            <person name="Latreille P."/>
            <person name="Sabo A."/>
            <person name="Pepin K."/>
            <person name="Bhonagiri V."/>
            <person name="Porwollik S."/>
            <person name="Ali J."/>
            <person name="Wilson R.K."/>
        </authorList>
    </citation>
    <scope>NUCLEOTIDE SEQUENCE [LARGE SCALE GENOMIC DNA]</scope>
    <source>
        <strain>ATCC 700721 / MGH 78578</strain>
    </source>
</reference>
<gene>
    <name evidence="2" type="primary">trmB</name>
    <name type="ordered locus">KPN78578_33280</name>
    <name type="ORF">KPN_03392</name>
</gene>